<dbReference type="EC" id="5.3.1.1" evidence="1"/>
<dbReference type="EMBL" id="AM260525">
    <property type="protein sequence ID" value="CAK01258.1"/>
    <property type="molecule type" value="Genomic_DNA"/>
</dbReference>
<dbReference type="RefSeq" id="WP_012231398.1">
    <property type="nucleotide sequence ID" value="NC_010161.1"/>
</dbReference>
<dbReference type="SMR" id="A9IS38"/>
<dbReference type="KEGG" id="btr:BT_0852"/>
<dbReference type="eggNOG" id="COG0149">
    <property type="taxonomic scope" value="Bacteria"/>
</dbReference>
<dbReference type="HOGENOM" id="CLU_024251_2_1_5"/>
<dbReference type="UniPathway" id="UPA00109">
    <property type="reaction ID" value="UER00189"/>
</dbReference>
<dbReference type="UniPathway" id="UPA00138"/>
<dbReference type="Proteomes" id="UP000001592">
    <property type="component" value="Chromosome"/>
</dbReference>
<dbReference type="GO" id="GO:0005829">
    <property type="term" value="C:cytosol"/>
    <property type="evidence" value="ECO:0007669"/>
    <property type="project" value="TreeGrafter"/>
</dbReference>
<dbReference type="GO" id="GO:0004807">
    <property type="term" value="F:triose-phosphate isomerase activity"/>
    <property type="evidence" value="ECO:0007669"/>
    <property type="project" value="UniProtKB-UniRule"/>
</dbReference>
<dbReference type="GO" id="GO:0006094">
    <property type="term" value="P:gluconeogenesis"/>
    <property type="evidence" value="ECO:0007669"/>
    <property type="project" value="UniProtKB-UniRule"/>
</dbReference>
<dbReference type="GO" id="GO:0046166">
    <property type="term" value="P:glyceraldehyde-3-phosphate biosynthetic process"/>
    <property type="evidence" value="ECO:0007669"/>
    <property type="project" value="TreeGrafter"/>
</dbReference>
<dbReference type="GO" id="GO:0019563">
    <property type="term" value="P:glycerol catabolic process"/>
    <property type="evidence" value="ECO:0007669"/>
    <property type="project" value="TreeGrafter"/>
</dbReference>
<dbReference type="GO" id="GO:0006096">
    <property type="term" value="P:glycolytic process"/>
    <property type="evidence" value="ECO:0007669"/>
    <property type="project" value="UniProtKB-UniRule"/>
</dbReference>
<dbReference type="CDD" id="cd00311">
    <property type="entry name" value="TIM"/>
    <property type="match status" value="1"/>
</dbReference>
<dbReference type="FunFam" id="3.20.20.70:FF:000016">
    <property type="entry name" value="Triosephosphate isomerase"/>
    <property type="match status" value="1"/>
</dbReference>
<dbReference type="Gene3D" id="3.20.20.70">
    <property type="entry name" value="Aldolase class I"/>
    <property type="match status" value="1"/>
</dbReference>
<dbReference type="HAMAP" id="MF_00147_B">
    <property type="entry name" value="TIM_B"/>
    <property type="match status" value="1"/>
</dbReference>
<dbReference type="InterPro" id="IPR013785">
    <property type="entry name" value="Aldolase_TIM"/>
</dbReference>
<dbReference type="InterPro" id="IPR035990">
    <property type="entry name" value="TIM_sf"/>
</dbReference>
<dbReference type="InterPro" id="IPR022896">
    <property type="entry name" value="TrioseP_Isoase_bac/euk"/>
</dbReference>
<dbReference type="InterPro" id="IPR000652">
    <property type="entry name" value="Triosephosphate_isomerase"/>
</dbReference>
<dbReference type="InterPro" id="IPR020861">
    <property type="entry name" value="Triosephosphate_isomerase_AS"/>
</dbReference>
<dbReference type="NCBIfam" id="TIGR00419">
    <property type="entry name" value="tim"/>
    <property type="match status" value="1"/>
</dbReference>
<dbReference type="PANTHER" id="PTHR21139">
    <property type="entry name" value="TRIOSEPHOSPHATE ISOMERASE"/>
    <property type="match status" value="1"/>
</dbReference>
<dbReference type="PANTHER" id="PTHR21139:SF42">
    <property type="entry name" value="TRIOSEPHOSPHATE ISOMERASE"/>
    <property type="match status" value="1"/>
</dbReference>
<dbReference type="Pfam" id="PF00121">
    <property type="entry name" value="TIM"/>
    <property type="match status" value="1"/>
</dbReference>
<dbReference type="SUPFAM" id="SSF51351">
    <property type="entry name" value="Triosephosphate isomerase (TIM)"/>
    <property type="match status" value="1"/>
</dbReference>
<dbReference type="PROSITE" id="PS00171">
    <property type="entry name" value="TIM_1"/>
    <property type="match status" value="1"/>
</dbReference>
<dbReference type="PROSITE" id="PS51440">
    <property type="entry name" value="TIM_2"/>
    <property type="match status" value="1"/>
</dbReference>
<gene>
    <name evidence="1" type="primary">tpiA</name>
    <name type="ordered locus">BT_0852</name>
</gene>
<comment type="function">
    <text evidence="1">Involved in the gluconeogenesis. Catalyzes stereospecifically the conversion of dihydroxyacetone phosphate (DHAP) to D-glyceraldehyde-3-phosphate (G3P).</text>
</comment>
<comment type="catalytic activity">
    <reaction evidence="1">
        <text>D-glyceraldehyde 3-phosphate = dihydroxyacetone phosphate</text>
        <dbReference type="Rhea" id="RHEA:18585"/>
        <dbReference type="ChEBI" id="CHEBI:57642"/>
        <dbReference type="ChEBI" id="CHEBI:59776"/>
        <dbReference type="EC" id="5.3.1.1"/>
    </reaction>
</comment>
<comment type="pathway">
    <text evidence="1">Carbohydrate biosynthesis; gluconeogenesis.</text>
</comment>
<comment type="pathway">
    <text evidence="1">Carbohydrate degradation; glycolysis; D-glyceraldehyde 3-phosphate from glycerone phosphate: step 1/1.</text>
</comment>
<comment type="subunit">
    <text evidence="1">Homodimer.</text>
</comment>
<comment type="subcellular location">
    <subcellularLocation>
        <location evidence="1">Cytoplasm</location>
    </subcellularLocation>
</comment>
<comment type="similarity">
    <text evidence="1">Belongs to the triosephosphate isomerase family.</text>
</comment>
<protein>
    <recommendedName>
        <fullName evidence="1">Triosephosphate isomerase</fullName>
        <shortName evidence="1">TIM</shortName>
        <shortName evidence="1">TPI</shortName>
        <ecNumber evidence="1">5.3.1.1</ecNumber>
    </recommendedName>
    <alternativeName>
        <fullName evidence="1">Triose-phosphate isomerase</fullName>
    </alternativeName>
</protein>
<proteinExistence type="inferred from homology"/>
<keyword id="KW-0963">Cytoplasm</keyword>
<keyword id="KW-0312">Gluconeogenesis</keyword>
<keyword id="KW-0324">Glycolysis</keyword>
<keyword id="KW-0413">Isomerase</keyword>
<reference key="1">
    <citation type="journal article" date="2007" name="Nat. Genet.">
        <title>Genomic analysis of Bartonella identifies type IV secretion systems as host adaptability factors.</title>
        <authorList>
            <person name="Saenz H.L."/>
            <person name="Engel P."/>
            <person name="Stoeckli M.C."/>
            <person name="Lanz C."/>
            <person name="Raddatz G."/>
            <person name="Vayssier-Taussat M."/>
            <person name="Birtles R."/>
            <person name="Schuster S.C."/>
            <person name="Dehio C."/>
        </authorList>
    </citation>
    <scope>NUCLEOTIDE SEQUENCE [LARGE SCALE GENOMIC DNA]</scope>
    <source>
        <strain>CIP 105476 / IBS 506</strain>
    </source>
</reference>
<accession>A9IS38</accession>
<organism>
    <name type="scientific">Bartonella tribocorum (strain CIP 105476 / IBS 506)</name>
    <dbReference type="NCBI Taxonomy" id="382640"/>
    <lineage>
        <taxon>Bacteria</taxon>
        <taxon>Pseudomonadati</taxon>
        <taxon>Pseudomonadota</taxon>
        <taxon>Alphaproteobacteria</taxon>
        <taxon>Hyphomicrobiales</taxon>
        <taxon>Bartonellaceae</taxon>
        <taxon>Bartonella</taxon>
    </lineage>
</organism>
<feature type="chain" id="PRO_1000076635" description="Triosephosphate isomerase">
    <location>
        <begin position="1"/>
        <end position="254"/>
    </location>
</feature>
<feature type="active site" description="Electrophile" evidence="1">
    <location>
        <position position="99"/>
    </location>
</feature>
<feature type="active site" description="Proton acceptor" evidence="1">
    <location>
        <position position="169"/>
    </location>
</feature>
<feature type="binding site" evidence="1">
    <location>
        <begin position="12"/>
        <end position="14"/>
    </location>
    <ligand>
        <name>substrate</name>
    </ligand>
</feature>
<feature type="binding site" evidence="1">
    <location>
        <position position="175"/>
    </location>
    <ligand>
        <name>substrate</name>
    </ligand>
</feature>
<feature type="binding site" evidence="1">
    <location>
        <position position="214"/>
    </location>
    <ligand>
        <name>substrate</name>
    </ligand>
</feature>
<feature type="binding site" evidence="1">
    <location>
        <begin position="235"/>
        <end position="236"/>
    </location>
    <ligand>
        <name>substrate</name>
    </ligand>
</feature>
<sequence>MSLNIRPFLAGNWKMNGTRESLGELRAIATGVSSNSGHLFEALICVPATLLSRAYDTLNGESLLLGGQNCHFDDYGPYTGDISAFMLKEAGASHVIIGHSERRTVYQENDAIVCAKVQAAWHAGLVALVCIGETLEERDNNKVMDVLAQQLEGSLPDDTTAENTIIAYEPVWAIGTGNTATSEDIAKVHYFIRDKICSRFGDEGNKIRLLYGGSVKPSSAFELLSIPHVNGALIGGASLKAIDFLTICDVCRKL</sequence>
<name>TPIS_BART1</name>
<evidence type="ECO:0000255" key="1">
    <source>
        <dbReference type="HAMAP-Rule" id="MF_00147"/>
    </source>
</evidence>